<proteinExistence type="evidence at protein level"/>
<dbReference type="EMBL" id="AF152493">
    <property type="protein sequence ID" value="AAD43754.1"/>
    <property type="molecule type" value="mRNA"/>
</dbReference>
<dbReference type="EMBL" id="AF217744">
    <property type="protein sequence ID" value="AAK51612.1"/>
    <property type="molecule type" value="mRNA"/>
</dbReference>
<dbReference type="EMBL" id="AK298296">
    <property type="protein sequence ID" value="BAG60554.1"/>
    <property type="molecule type" value="mRNA"/>
</dbReference>
<dbReference type="EMBL" id="AC005752">
    <property type="status" value="NOT_ANNOTATED_CDS"/>
    <property type="molecule type" value="Genomic_DNA"/>
</dbReference>
<dbReference type="EMBL" id="BC098144">
    <property type="protein sequence ID" value="AAH98144.1"/>
    <property type="molecule type" value="mRNA"/>
</dbReference>
<dbReference type="EMBL" id="BC099728">
    <property type="protein sequence ID" value="AAH99728.1"/>
    <property type="molecule type" value="mRNA"/>
</dbReference>
<dbReference type="CCDS" id="CCDS4256.1">
    <molecule id="Q9Y5E9-1"/>
</dbReference>
<dbReference type="RefSeq" id="NP_061757.1">
    <molecule id="Q9Y5E9-1"/>
    <property type="nucleotide sequence ID" value="NM_018934.4"/>
</dbReference>
<dbReference type="SMR" id="Q9Y5E9"/>
<dbReference type="BioGRID" id="121062">
    <property type="interactions" value="22"/>
</dbReference>
<dbReference type="FunCoup" id="Q9Y5E9">
    <property type="interactions" value="23"/>
</dbReference>
<dbReference type="IntAct" id="Q9Y5E9">
    <property type="interactions" value="20"/>
</dbReference>
<dbReference type="STRING" id="9606.ENSP00000239449"/>
<dbReference type="GlyConnect" id="1678">
    <property type="glycosylation" value="1 N-Linked glycan (1 site)"/>
</dbReference>
<dbReference type="GlyCosmos" id="Q9Y5E9">
    <property type="glycosylation" value="6 sites, 1 glycan"/>
</dbReference>
<dbReference type="GlyGen" id="Q9Y5E9">
    <property type="glycosylation" value="6 sites, 1 N-linked glycan (1 site)"/>
</dbReference>
<dbReference type="iPTMnet" id="Q9Y5E9"/>
<dbReference type="PhosphoSitePlus" id="Q9Y5E9"/>
<dbReference type="BioMuta" id="PCDHB14"/>
<dbReference type="DMDM" id="13431380"/>
<dbReference type="jPOST" id="Q9Y5E9"/>
<dbReference type="MassIVE" id="Q9Y5E9"/>
<dbReference type="PaxDb" id="9606-ENSP00000239449"/>
<dbReference type="PeptideAtlas" id="Q9Y5E9"/>
<dbReference type="ProteomicsDB" id="4778"/>
<dbReference type="ProteomicsDB" id="86348">
    <molecule id="Q9Y5E9-1"/>
</dbReference>
<dbReference type="Antibodypedia" id="27242">
    <property type="antibodies" value="100 antibodies from 19 providers"/>
</dbReference>
<dbReference type="DNASU" id="56122"/>
<dbReference type="Ensembl" id="ENST00000239449.7">
    <molecule id="Q9Y5E9-1"/>
    <property type="protein sequence ID" value="ENSP00000239449.4"/>
    <property type="gene ID" value="ENSG00000120327.7"/>
</dbReference>
<dbReference type="Ensembl" id="ENST00000624896.1">
    <molecule id="Q9Y5E9-2"/>
    <property type="protein sequence ID" value="ENSP00000485055.1"/>
    <property type="gene ID" value="ENSG00000120327.7"/>
</dbReference>
<dbReference type="Ensembl" id="ENST00000708384.1">
    <molecule id="Q9Y5E9-1"/>
    <property type="protein sequence ID" value="ENSP00000517204.1"/>
    <property type="gene ID" value="ENSG00000291693.1"/>
</dbReference>
<dbReference type="Ensembl" id="ENST00000708385.1">
    <molecule id="Q9Y5E9-2"/>
    <property type="protein sequence ID" value="ENSP00000517205.1"/>
    <property type="gene ID" value="ENSG00000291693.1"/>
</dbReference>
<dbReference type="GeneID" id="56122"/>
<dbReference type="KEGG" id="hsa:56122"/>
<dbReference type="MANE-Select" id="ENST00000239449.7">
    <property type="protein sequence ID" value="ENSP00000239449.4"/>
    <property type="RefSeq nucleotide sequence ID" value="NM_018934.4"/>
    <property type="RefSeq protein sequence ID" value="NP_061757.1"/>
</dbReference>
<dbReference type="UCSC" id="uc003ljb.5">
    <molecule id="Q9Y5E9-1"/>
    <property type="organism name" value="human"/>
</dbReference>
<dbReference type="AGR" id="HGNC:8685"/>
<dbReference type="CTD" id="56122"/>
<dbReference type="DisGeNET" id="56122"/>
<dbReference type="GeneCards" id="PCDHB14"/>
<dbReference type="HGNC" id="HGNC:8685">
    <property type="gene designation" value="PCDHB14"/>
</dbReference>
<dbReference type="HPA" id="ENSG00000120327">
    <property type="expression patterns" value="Low tissue specificity"/>
</dbReference>
<dbReference type="MIM" id="604967">
    <property type="type" value="gene"/>
</dbReference>
<dbReference type="MIM" id="606340">
    <property type="type" value="gene"/>
</dbReference>
<dbReference type="neXtProt" id="NX_Q9Y5E9"/>
<dbReference type="OpenTargets" id="ENSG00000120327"/>
<dbReference type="PharmGKB" id="PA33030"/>
<dbReference type="VEuPathDB" id="HostDB:ENSG00000120327"/>
<dbReference type="eggNOG" id="KOG3594">
    <property type="taxonomic scope" value="Eukaryota"/>
</dbReference>
<dbReference type="GeneTree" id="ENSGT00940000163362"/>
<dbReference type="HOGENOM" id="CLU_006480_3_0_1"/>
<dbReference type="InParanoid" id="Q9Y5E9"/>
<dbReference type="OMA" id="SWIVTIS"/>
<dbReference type="OrthoDB" id="6252479at2759"/>
<dbReference type="PAN-GO" id="Q9Y5E9">
    <property type="GO annotations" value="2 GO annotations based on evolutionary models"/>
</dbReference>
<dbReference type="PhylomeDB" id="Q9Y5E9"/>
<dbReference type="TreeFam" id="TF332299"/>
<dbReference type="PathwayCommons" id="Q9Y5E9"/>
<dbReference type="SignaLink" id="Q9Y5E9"/>
<dbReference type="BioGRID-ORCS" id="56122">
    <property type="hits" value="18 hits in 1106 CRISPR screens"/>
</dbReference>
<dbReference type="ChiTaRS" id="PCDHB14">
    <property type="organism name" value="human"/>
</dbReference>
<dbReference type="GeneWiki" id="PCDHB14"/>
<dbReference type="GenomeRNAi" id="56122"/>
<dbReference type="Pharos" id="Q9Y5E9">
    <property type="development level" value="Tdark"/>
</dbReference>
<dbReference type="PRO" id="PR:Q9Y5E9"/>
<dbReference type="Proteomes" id="UP000005640">
    <property type="component" value="Chromosome 5"/>
</dbReference>
<dbReference type="RNAct" id="Q9Y5E9">
    <property type="molecule type" value="protein"/>
</dbReference>
<dbReference type="Bgee" id="ENSG00000120327">
    <property type="expression patterns" value="Expressed in cortical plate and 148 other cell types or tissues"/>
</dbReference>
<dbReference type="GO" id="GO:0016020">
    <property type="term" value="C:membrane"/>
    <property type="evidence" value="ECO:0000303"/>
    <property type="project" value="UniProtKB"/>
</dbReference>
<dbReference type="GO" id="GO:0005886">
    <property type="term" value="C:plasma membrane"/>
    <property type="evidence" value="ECO:0000318"/>
    <property type="project" value="GO_Central"/>
</dbReference>
<dbReference type="GO" id="GO:0045202">
    <property type="term" value="C:synapse"/>
    <property type="evidence" value="ECO:0007669"/>
    <property type="project" value="GOC"/>
</dbReference>
<dbReference type="GO" id="GO:0005509">
    <property type="term" value="F:calcium ion binding"/>
    <property type="evidence" value="ECO:0007669"/>
    <property type="project" value="InterPro"/>
</dbReference>
<dbReference type="GO" id="GO:0016339">
    <property type="term" value="P:calcium-dependent cell-cell adhesion via plasma membrane cell adhesion molecules"/>
    <property type="evidence" value="ECO:0000303"/>
    <property type="project" value="UniProtKB"/>
</dbReference>
<dbReference type="GO" id="GO:0007155">
    <property type="term" value="P:cell adhesion"/>
    <property type="evidence" value="ECO:0000318"/>
    <property type="project" value="GO_Central"/>
</dbReference>
<dbReference type="GO" id="GO:0007268">
    <property type="term" value="P:chemical synaptic transmission"/>
    <property type="evidence" value="ECO:0000304"/>
    <property type="project" value="UniProtKB"/>
</dbReference>
<dbReference type="GO" id="GO:0007156">
    <property type="term" value="P:homophilic cell adhesion via plasma membrane adhesion molecules"/>
    <property type="evidence" value="ECO:0007669"/>
    <property type="project" value="InterPro"/>
</dbReference>
<dbReference type="GO" id="GO:0007416">
    <property type="term" value="P:synapse assembly"/>
    <property type="evidence" value="ECO:0000304"/>
    <property type="project" value="UniProtKB"/>
</dbReference>
<dbReference type="CDD" id="cd11304">
    <property type="entry name" value="Cadherin_repeat"/>
    <property type="match status" value="5"/>
</dbReference>
<dbReference type="FunFam" id="2.60.40.60:FF:000001">
    <property type="entry name" value="Protocadherin alpha 2"/>
    <property type="match status" value="1"/>
</dbReference>
<dbReference type="FunFam" id="2.60.40.60:FF:000002">
    <property type="entry name" value="Protocadherin alpha 2"/>
    <property type="match status" value="1"/>
</dbReference>
<dbReference type="FunFam" id="2.60.40.60:FF:000006">
    <property type="entry name" value="Protocadherin alpha 2"/>
    <property type="match status" value="1"/>
</dbReference>
<dbReference type="FunFam" id="2.60.40.60:FF:000046">
    <property type="entry name" value="Protocadherin beta 5"/>
    <property type="match status" value="1"/>
</dbReference>
<dbReference type="FunFam" id="2.60.40.60:FF:000309">
    <property type="entry name" value="Protocadherin beta-8"/>
    <property type="match status" value="1"/>
</dbReference>
<dbReference type="FunFam" id="2.60.40.60:FF:000018">
    <property type="entry name" value="Protocadherin gamma c3"/>
    <property type="match status" value="1"/>
</dbReference>
<dbReference type="Gene3D" id="2.60.40.60">
    <property type="entry name" value="Cadherins"/>
    <property type="match status" value="6"/>
</dbReference>
<dbReference type="InterPro" id="IPR002126">
    <property type="entry name" value="Cadherin-like_dom"/>
</dbReference>
<dbReference type="InterPro" id="IPR015919">
    <property type="entry name" value="Cadherin-like_sf"/>
</dbReference>
<dbReference type="InterPro" id="IPR032455">
    <property type="entry name" value="Cadherin_C"/>
</dbReference>
<dbReference type="InterPro" id="IPR020894">
    <property type="entry name" value="Cadherin_CS"/>
</dbReference>
<dbReference type="InterPro" id="IPR013164">
    <property type="entry name" value="Cadherin_N"/>
</dbReference>
<dbReference type="InterPro" id="IPR050174">
    <property type="entry name" value="Protocadherin/Cadherin-CA"/>
</dbReference>
<dbReference type="PANTHER" id="PTHR24028">
    <property type="entry name" value="CADHERIN-87A"/>
    <property type="match status" value="1"/>
</dbReference>
<dbReference type="PANTHER" id="PTHR24028:SF81">
    <property type="entry name" value="PROTOCADHERIN BETA-14"/>
    <property type="match status" value="1"/>
</dbReference>
<dbReference type="Pfam" id="PF00028">
    <property type="entry name" value="Cadherin"/>
    <property type="match status" value="5"/>
</dbReference>
<dbReference type="Pfam" id="PF08266">
    <property type="entry name" value="Cadherin_2"/>
    <property type="match status" value="1"/>
</dbReference>
<dbReference type="Pfam" id="PF16492">
    <property type="entry name" value="Cadherin_C_2"/>
    <property type="match status" value="1"/>
</dbReference>
<dbReference type="PRINTS" id="PR00205">
    <property type="entry name" value="CADHERIN"/>
</dbReference>
<dbReference type="SMART" id="SM00112">
    <property type="entry name" value="CA"/>
    <property type="match status" value="5"/>
</dbReference>
<dbReference type="SUPFAM" id="SSF49313">
    <property type="entry name" value="Cadherin-like"/>
    <property type="match status" value="6"/>
</dbReference>
<dbReference type="PROSITE" id="PS00232">
    <property type="entry name" value="CADHERIN_1"/>
    <property type="match status" value="5"/>
</dbReference>
<dbReference type="PROSITE" id="PS50268">
    <property type="entry name" value="CADHERIN_2"/>
    <property type="match status" value="5"/>
</dbReference>
<feature type="signal peptide" evidence="2">
    <location>
        <begin position="1"/>
        <end position="26"/>
    </location>
</feature>
<feature type="chain" id="PRO_0000003940" description="Protocadherin beta-14">
    <location>
        <begin position="27"/>
        <end position="798"/>
    </location>
</feature>
<feature type="topological domain" description="Extracellular" evidence="2">
    <location>
        <begin position="27"/>
        <end position="686"/>
    </location>
</feature>
<feature type="transmembrane region" description="Helical" evidence="2">
    <location>
        <begin position="687"/>
        <end position="711"/>
    </location>
</feature>
<feature type="topological domain" description="Cytoplasmic" evidence="2">
    <location>
        <begin position="712"/>
        <end position="798"/>
    </location>
</feature>
<feature type="domain" description="Cadherin 1" evidence="3">
    <location>
        <begin position="35"/>
        <end position="133"/>
    </location>
</feature>
<feature type="domain" description="Cadherin 2" evidence="3">
    <location>
        <begin position="138"/>
        <end position="242"/>
    </location>
</feature>
<feature type="domain" description="Cadherin 3" evidence="3">
    <location>
        <begin position="247"/>
        <end position="347"/>
    </location>
</feature>
<feature type="domain" description="Cadherin 4" evidence="3">
    <location>
        <begin position="352"/>
        <end position="451"/>
    </location>
</feature>
<feature type="domain" description="Cadherin 5" evidence="3">
    <location>
        <begin position="456"/>
        <end position="561"/>
    </location>
</feature>
<feature type="domain" description="Cadherin 6" evidence="3">
    <location>
        <begin position="568"/>
        <end position="671"/>
    </location>
</feature>
<feature type="glycosylation site" description="N-linked (GlcNAc...) asparagine" evidence="2">
    <location>
        <position position="169"/>
    </location>
</feature>
<feature type="glycosylation site" description="N-linked (GlcNAc...) asparagine" evidence="2">
    <location>
        <position position="359"/>
    </location>
</feature>
<feature type="glycosylation site" description="N-linked (GlcNAc...) asparagine" evidence="2">
    <location>
        <position position="418"/>
    </location>
</feature>
<feature type="glycosylation site" description="N-linked (GlcNAc...) asparagine" evidence="2">
    <location>
        <position position="436"/>
    </location>
</feature>
<feature type="glycosylation site" description="N-linked (GlcNAc...) asparagine" evidence="2">
    <location>
        <position position="487"/>
    </location>
</feature>
<feature type="glycosylation site" description="N-linked (GlcNAc...) asparagine" evidence="2">
    <location>
        <position position="567"/>
    </location>
</feature>
<feature type="disulfide bond" evidence="1">
    <location>
        <begin position="96"/>
        <end position="102"/>
    </location>
</feature>
<feature type="splice variant" id="VSP_055932" description="In isoform 2." evidence="4">
    <location>
        <begin position="1"/>
        <end position="153"/>
    </location>
</feature>
<reference key="1">
    <citation type="journal article" date="1999" name="Cell">
        <title>A striking organization of a large family of human neural cadherin-like cell adhesion genes.</title>
        <authorList>
            <person name="Wu Q."/>
            <person name="Maniatis T."/>
        </authorList>
    </citation>
    <scope>NUCLEOTIDE SEQUENCE [MRNA] (ISOFORM 1)</scope>
</reference>
<reference key="2">
    <citation type="journal article" date="2001" name="FEBS Lett.">
        <title>The human and murine protocadherin-beta one-exon gene families show high evolutionary conservation, despite the difference in gene number.</title>
        <authorList>
            <person name="Vanhalst K."/>
            <person name="Kools P."/>
            <person name="Vanden Eynde E."/>
            <person name="van Roy F."/>
        </authorList>
    </citation>
    <scope>NUCLEOTIDE SEQUENCE [MRNA] (ISOFORM 1)</scope>
</reference>
<reference key="3">
    <citation type="journal article" date="2004" name="Nat. Genet.">
        <title>Complete sequencing and characterization of 21,243 full-length human cDNAs.</title>
        <authorList>
            <person name="Ota T."/>
            <person name="Suzuki Y."/>
            <person name="Nishikawa T."/>
            <person name="Otsuki T."/>
            <person name="Sugiyama T."/>
            <person name="Irie R."/>
            <person name="Wakamatsu A."/>
            <person name="Hayashi K."/>
            <person name="Sato H."/>
            <person name="Nagai K."/>
            <person name="Kimura K."/>
            <person name="Makita H."/>
            <person name="Sekine M."/>
            <person name="Obayashi M."/>
            <person name="Nishi T."/>
            <person name="Shibahara T."/>
            <person name="Tanaka T."/>
            <person name="Ishii S."/>
            <person name="Yamamoto J."/>
            <person name="Saito K."/>
            <person name="Kawai Y."/>
            <person name="Isono Y."/>
            <person name="Nakamura Y."/>
            <person name="Nagahari K."/>
            <person name="Murakami K."/>
            <person name="Yasuda T."/>
            <person name="Iwayanagi T."/>
            <person name="Wagatsuma M."/>
            <person name="Shiratori A."/>
            <person name="Sudo H."/>
            <person name="Hosoiri T."/>
            <person name="Kaku Y."/>
            <person name="Kodaira H."/>
            <person name="Kondo H."/>
            <person name="Sugawara M."/>
            <person name="Takahashi M."/>
            <person name="Kanda K."/>
            <person name="Yokoi T."/>
            <person name="Furuya T."/>
            <person name="Kikkawa E."/>
            <person name="Omura Y."/>
            <person name="Abe K."/>
            <person name="Kamihara K."/>
            <person name="Katsuta N."/>
            <person name="Sato K."/>
            <person name="Tanikawa M."/>
            <person name="Yamazaki M."/>
            <person name="Ninomiya K."/>
            <person name="Ishibashi T."/>
            <person name="Yamashita H."/>
            <person name="Murakawa K."/>
            <person name="Fujimori K."/>
            <person name="Tanai H."/>
            <person name="Kimata M."/>
            <person name="Watanabe M."/>
            <person name="Hiraoka S."/>
            <person name="Chiba Y."/>
            <person name="Ishida S."/>
            <person name="Ono Y."/>
            <person name="Takiguchi S."/>
            <person name="Watanabe S."/>
            <person name="Yosida M."/>
            <person name="Hotuta T."/>
            <person name="Kusano J."/>
            <person name="Kanehori K."/>
            <person name="Takahashi-Fujii A."/>
            <person name="Hara H."/>
            <person name="Tanase T.-O."/>
            <person name="Nomura Y."/>
            <person name="Togiya S."/>
            <person name="Komai F."/>
            <person name="Hara R."/>
            <person name="Takeuchi K."/>
            <person name="Arita M."/>
            <person name="Imose N."/>
            <person name="Musashino K."/>
            <person name="Yuuki H."/>
            <person name="Oshima A."/>
            <person name="Sasaki N."/>
            <person name="Aotsuka S."/>
            <person name="Yoshikawa Y."/>
            <person name="Matsunawa H."/>
            <person name="Ichihara T."/>
            <person name="Shiohata N."/>
            <person name="Sano S."/>
            <person name="Moriya S."/>
            <person name="Momiyama H."/>
            <person name="Satoh N."/>
            <person name="Takami S."/>
            <person name="Terashima Y."/>
            <person name="Suzuki O."/>
            <person name="Nakagawa S."/>
            <person name="Senoh A."/>
            <person name="Mizoguchi H."/>
            <person name="Goto Y."/>
            <person name="Shimizu F."/>
            <person name="Wakebe H."/>
            <person name="Hishigaki H."/>
            <person name="Watanabe T."/>
            <person name="Sugiyama A."/>
            <person name="Takemoto M."/>
            <person name="Kawakami B."/>
            <person name="Yamazaki M."/>
            <person name="Watanabe K."/>
            <person name="Kumagai A."/>
            <person name="Itakura S."/>
            <person name="Fukuzumi Y."/>
            <person name="Fujimori Y."/>
            <person name="Komiyama M."/>
            <person name="Tashiro H."/>
            <person name="Tanigami A."/>
            <person name="Fujiwara T."/>
            <person name="Ono T."/>
            <person name="Yamada K."/>
            <person name="Fujii Y."/>
            <person name="Ozaki K."/>
            <person name="Hirao M."/>
            <person name="Ohmori Y."/>
            <person name="Kawabata A."/>
            <person name="Hikiji T."/>
            <person name="Kobatake N."/>
            <person name="Inagaki H."/>
            <person name="Ikema Y."/>
            <person name="Okamoto S."/>
            <person name="Okitani R."/>
            <person name="Kawakami T."/>
            <person name="Noguchi S."/>
            <person name="Itoh T."/>
            <person name="Shigeta K."/>
            <person name="Senba T."/>
            <person name="Matsumura K."/>
            <person name="Nakajima Y."/>
            <person name="Mizuno T."/>
            <person name="Morinaga M."/>
            <person name="Sasaki M."/>
            <person name="Togashi T."/>
            <person name="Oyama M."/>
            <person name="Hata H."/>
            <person name="Watanabe M."/>
            <person name="Komatsu T."/>
            <person name="Mizushima-Sugano J."/>
            <person name="Satoh T."/>
            <person name="Shirai Y."/>
            <person name="Takahashi Y."/>
            <person name="Nakagawa K."/>
            <person name="Okumura K."/>
            <person name="Nagase T."/>
            <person name="Nomura N."/>
            <person name="Kikuchi H."/>
            <person name="Masuho Y."/>
            <person name="Yamashita R."/>
            <person name="Nakai K."/>
            <person name="Yada T."/>
            <person name="Nakamura Y."/>
            <person name="Ohara O."/>
            <person name="Isogai T."/>
            <person name="Sugano S."/>
        </authorList>
    </citation>
    <scope>NUCLEOTIDE SEQUENCE [LARGE SCALE MRNA] (ISOFORM 2)</scope>
    <source>
        <tissue>Kidney</tissue>
    </source>
</reference>
<reference key="4">
    <citation type="journal article" date="2004" name="Nature">
        <title>The DNA sequence and comparative analysis of human chromosome 5.</title>
        <authorList>
            <person name="Schmutz J."/>
            <person name="Martin J."/>
            <person name="Terry A."/>
            <person name="Couronne O."/>
            <person name="Grimwood J."/>
            <person name="Lowry S."/>
            <person name="Gordon L.A."/>
            <person name="Scott D."/>
            <person name="Xie G."/>
            <person name="Huang W."/>
            <person name="Hellsten U."/>
            <person name="Tran-Gyamfi M."/>
            <person name="She X."/>
            <person name="Prabhakar S."/>
            <person name="Aerts A."/>
            <person name="Altherr M."/>
            <person name="Bajorek E."/>
            <person name="Black S."/>
            <person name="Branscomb E."/>
            <person name="Caoile C."/>
            <person name="Challacombe J.F."/>
            <person name="Chan Y.M."/>
            <person name="Denys M."/>
            <person name="Detter J.C."/>
            <person name="Escobar J."/>
            <person name="Flowers D."/>
            <person name="Fotopulos D."/>
            <person name="Glavina T."/>
            <person name="Gomez M."/>
            <person name="Gonzales E."/>
            <person name="Goodstein D."/>
            <person name="Grigoriev I."/>
            <person name="Groza M."/>
            <person name="Hammon N."/>
            <person name="Hawkins T."/>
            <person name="Haydu L."/>
            <person name="Israni S."/>
            <person name="Jett J."/>
            <person name="Kadner K."/>
            <person name="Kimball H."/>
            <person name="Kobayashi A."/>
            <person name="Lopez F."/>
            <person name="Lou Y."/>
            <person name="Martinez D."/>
            <person name="Medina C."/>
            <person name="Morgan J."/>
            <person name="Nandkeshwar R."/>
            <person name="Noonan J.P."/>
            <person name="Pitluck S."/>
            <person name="Pollard M."/>
            <person name="Predki P."/>
            <person name="Priest J."/>
            <person name="Ramirez L."/>
            <person name="Retterer J."/>
            <person name="Rodriguez A."/>
            <person name="Rogers S."/>
            <person name="Salamov A."/>
            <person name="Salazar A."/>
            <person name="Thayer N."/>
            <person name="Tice H."/>
            <person name="Tsai M."/>
            <person name="Ustaszewska A."/>
            <person name="Vo N."/>
            <person name="Wheeler J."/>
            <person name="Wu K."/>
            <person name="Yang J."/>
            <person name="Dickson M."/>
            <person name="Cheng J.-F."/>
            <person name="Eichler E.E."/>
            <person name="Olsen A."/>
            <person name="Pennacchio L.A."/>
            <person name="Rokhsar D.S."/>
            <person name="Richardson P."/>
            <person name="Lucas S.M."/>
            <person name="Myers R.M."/>
            <person name="Rubin E.M."/>
        </authorList>
    </citation>
    <scope>NUCLEOTIDE SEQUENCE [LARGE SCALE GENOMIC DNA]</scope>
</reference>
<reference key="5">
    <citation type="journal article" date="2004" name="Genome Res.">
        <title>The status, quality, and expansion of the NIH full-length cDNA project: the Mammalian Gene Collection (MGC).</title>
        <authorList>
            <consortium name="The MGC Project Team"/>
        </authorList>
    </citation>
    <scope>NUCLEOTIDE SEQUENCE [LARGE SCALE MRNA] (ISOFORM 1)</scope>
</reference>
<organism>
    <name type="scientific">Homo sapiens</name>
    <name type="common">Human</name>
    <dbReference type="NCBI Taxonomy" id="9606"/>
    <lineage>
        <taxon>Eukaryota</taxon>
        <taxon>Metazoa</taxon>
        <taxon>Chordata</taxon>
        <taxon>Craniata</taxon>
        <taxon>Vertebrata</taxon>
        <taxon>Euteleostomi</taxon>
        <taxon>Mammalia</taxon>
        <taxon>Eutheria</taxon>
        <taxon>Euarchontoglires</taxon>
        <taxon>Primates</taxon>
        <taxon>Haplorrhini</taxon>
        <taxon>Catarrhini</taxon>
        <taxon>Hominidae</taxon>
        <taxon>Homo</taxon>
    </lineage>
</organism>
<gene>
    <name type="primary">PCDHB14</name>
</gene>
<name>PCDBE_HUMAN</name>
<evidence type="ECO:0000250" key="1"/>
<evidence type="ECO:0000255" key="2"/>
<evidence type="ECO:0000255" key="3">
    <source>
        <dbReference type="PROSITE-ProRule" id="PRU00043"/>
    </source>
</evidence>
<evidence type="ECO:0000303" key="4">
    <source>
    </source>
</evidence>
<protein>
    <recommendedName>
        <fullName>Protocadherin beta-14</fullName>
        <shortName>PCDH-beta-14</shortName>
    </recommendedName>
</protein>
<accession>Q9Y5E9</accession>
<accession>B4DPE2</accession>
<accession>Q4FZA4</accession>
<accession>Q4KN11</accession>
<sequence>MEIRGALDLRKRQVLIFLVLLGLSRAGTESAHYSVAEETEIGSFVANLARDLGLGVEELSSREARVVSDDNKKYLHLDLLTGNLLLNEKLDRDELCGSTEPCVLHFQVVLENPLQFFRFELCVKDINDHSPTFLDKEILIKISEGTTVGATFLMESAQDLDVGSNSLQNYTISPNSHFYIKIPDSSDRKIYPELVLDRALDYEQEAELRLTLTAVDGGSPPKSGTTLVLIKVLDINDNAPEFPQSLYEVQVPEDRPLGSWIATISAKDLDAGNYGKISYTFFHASEDIRKTFEINPISGEVNLRSPLDFEVIQSYTINIQATDGGGLSGKCTLLVKVMDINDNPPEVTISSITKRIPENASETLVALFSILDQDSGDNGRMICSIQDNLPFFLKPTFKNFFTLVSEKALDRESQAEYNITITVTDLGTPRLKTEYNITVLLSDVNDNAPTFTQTSYTLFVRENNSPALHIGSVSATDRDSGTNAQVNYSLLPPQDRHLPLASLVSINADNGHLFALRSLDYEALQEFEFRVGATDRGSPALSSEALVRVLVLDANDNSPFVLYPLQNGSAPCTELVPRAAEPGYLVTKVVAVDGDSGQNAWLSYQLLKATEPGLFGVWAHNGEVRTARLLSERDAAKHRLVVLVKDNGEPPRSATATLHVLLVDGFSQPYLPLPEAAPAQAQADSLTVYLVVALASVSSLFLFSVLLFVAVRLCRRSRAASVGRCSVPEGPFPGHLVDVSGTGTLSQSYQYEVCLTGGSGTNEFKFLKPIIPNFQVHDTGRNMGEIENFRNSFGLNIQ</sequence>
<comment type="function">
    <text>Potential calcium-dependent cell-adhesion protein. May be involved in the establishment and maintenance of specific neuronal connections in the brain.</text>
</comment>
<comment type="interaction">
    <interactant intactId="EBI-10329013">
        <id>Q9Y5E9</id>
    </interactant>
    <interactant intactId="EBI-357530">
        <id>Q9ULX6</id>
        <label>AKAP8L</label>
    </interactant>
    <organismsDiffer>false</organismsDiffer>
    <experiments>3</experiments>
</comment>
<comment type="interaction">
    <interactant intactId="EBI-10329013">
        <id>Q9Y5E9</id>
    </interactant>
    <interactant intactId="EBI-5916454">
        <id>A6NEM1</id>
        <label>GOLGA6L9</label>
    </interactant>
    <organismsDiffer>false</organismsDiffer>
    <experiments>3</experiments>
</comment>
<comment type="interaction">
    <interactant intactId="EBI-10329013">
        <id>Q9Y5E9</id>
    </interactant>
    <interactant intactId="EBI-304185">
        <id>P61978</id>
        <label>HNRNPK</label>
    </interactant>
    <organismsDiffer>false</organismsDiffer>
    <experiments>6</experiments>
</comment>
<comment type="interaction">
    <interactant intactId="EBI-10329013">
        <id>Q9Y5E9</id>
    </interactant>
    <interactant intactId="EBI-7060731">
        <id>P61978-2</id>
        <label>HNRNPK</label>
    </interactant>
    <organismsDiffer>false</organismsDiffer>
    <experiments>3</experiments>
</comment>
<comment type="interaction">
    <interactant intactId="EBI-10329013">
        <id>Q9Y5E9</id>
    </interactant>
    <interactant intactId="EBI-12236340">
        <id>O43390-2</id>
        <label>HNRNPR</label>
    </interactant>
    <organismsDiffer>false</organismsDiffer>
    <experiments>3</experiments>
</comment>
<comment type="interaction">
    <interactant intactId="EBI-10329013">
        <id>Q9Y5E9</id>
    </interactant>
    <interactant intactId="EBI-722504">
        <id>O75525</id>
        <label>KHDRBS3</label>
    </interactant>
    <organismsDiffer>false</organismsDiffer>
    <experiments>3</experiments>
</comment>
<comment type="interaction">
    <interactant intactId="EBI-10329013">
        <id>Q9Y5E9</id>
    </interactant>
    <interactant intactId="EBI-3044087">
        <id>Q7Z3Y8</id>
        <label>KRT27</label>
    </interactant>
    <organismsDiffer>false</organismsDiffer>
    <experiments>3</experiments>
</comment>
<comment type="interaction">
    <interactant intactId="EBI-10329013">
        <id>Q9Y5E9</id>
    </interactant>
    <interactant intactId="EBI-22311199">
        <id>Q3LI67</id>
        <label>KRTAP6-3</label>
    </interactant>
    <organismsDiffer>false</organismsDiffer>
    <experiments>3</experiments>
</comment>
<comment type="interaction">
    <interactant intactId="EBI-10329013">
        <id>Q9Y5E9</id>
    </interactant>
    <interactant intactId="EBI-11522433">
        <id>Q5JR59-3</id>
        <label>MTUS2</label>
    </interactant>
    <organismsDiffer>false</organismsDiffer>
    <experiments>3</experiments>
</comment>
<comment type="interaction">
    <interactant intactId="EBI-10329013">
        <id>Q9Y5E9</id>
    </interactant>
    <interactant intactId="EBI-1050964">
        <id>O43586</id>
        <label>PSTPIP1</label>
    </interactant>
    <organismsDiffer>false</organismsDiffer>
    <experiments>6</experiments>
</comment>
<comment type="interaction">
    <interactant intactId="EBI-10329013">
        <id>Q9Y5E9</id>
    </interactant>
    <interactant intactId="EBI-2880222">
        <id>Q96QR8</id>
        <label>PURB</label>
    </interactant>
    <organismsDiffer>false</organismsDiffer>
    <experiments>3</experiments>
</comment>
<comment type="interaction">
    <interactant intactId="EBI-10329013">
        <id>Q9Y5E9</id>
    </interactant>
    <interactant intactId="EBI-743526">
        <id>P38159</id>
        <label>RBMX</label>
    </interactant>
    <organismsDiffer>false</organismsDiffer>
    <experiments>3</experiments>
</comment>
<comment type="interaction">
    <interactant intactId="EBI-10329013">
        <id>Q9Y5E9</id>
    </interactant>
    <interactant intactId="EBI-8638511">
        <id>P0DJD3</id>
        <label>RBMY1A1</label>
    </interactant>
    <organismsDiffer>false</organismsDiffer>
    <experiments>3</experiments>
</comment>
<comment type="interaction">
    <interactant intactId="EBI-10329013">
        <id>Q9Y5E9</id>
    </interactant>
    <interactant intactId="EBI-11994018">
        <id>P0DJD3-2</id>
        <label>RBMY1A1</label>
    </interactant>
    <organismsDiffer>false</organismsDiffer>
    <experiments>3</experiments>
</comment>
<comment type="interaction">
    <interactant intactId="EBI-10329013">
        <id>Q9Y5E9</id>
    </interactant>
    <interactant intactId="EBI-8642021">
        <id>Q15415</id>
        <label>RBMY1J</label>
    </interactant>
    <organismsDiffer>false</organismsDiffer>
    <experiments>6</experiments>
</comment>
<comment type="interaction">
    <interactant intactId="EBI-10329013">
        <id>Q9Y5E9</id>
    </interactant>
    <interactant intactId="EBI-372557">
        <id>P84103</id>
        <label>SRSF3</label>
    </interactant>
    <organismsDiffer>false</organismsDiffer>
    <experiments>3</experiments>
</comment>
<comment type="interaction">
    <interactant intactId="EBI-10329013">
        <id>Q9Y5E9</id>
    </interactant>
    <interactant intactId="EBI-725485">
        <id>P62995</id>
        <label>TRA2B</label>
    </interactant>
    <organismsDiffer>false</organismsDiffer>
    <experiments>3</experiments>
</comment>
<comment type="subcellular location">
    <subcellularLocation>
        <location evidence="1">Cell membrane</location>
        <topology evidence="1">Single-pass type I membrane protein</topology>
    </subcellularLocation>
</comment>
<comment type="alternative products">
    <event type="alternative splicing"/>
    <isoform>
        <id>Q9Y5E9-1</id>
        <name>1</name>
        <sequence type="displayed"/>
    </isoform>
    <isoform>
        <id>Q9Y5E9-2</id>
        <name>2</name>
        <sequence type="described" ref="VSP_055932"/>
    </isoform>
</comment>
<keyword id="KW-0025">Alternative splicing</keyword>
<keyword id="KW-0106">Calcium</keyword>
<keyword id="KW-0130">Cell adhesion</keyword>
<keyword id="KW-1003">Cell membrane</keyword>
<keyword id="KW-1015">Disulfide bond</keyword>
<keyword id="KW-0325">Glycoprotein</keyword>
<keyword id="KW-0472">Membrane</keyword>
<keyword id="KW-1267">Proteomics identification</keyword>
<keyword id="KW-1185">Reference proteome</keyword>
<keyword id="KW-0677">Repeat</keyword>
<keyword id="KW-0732">Signal</keyword>
<keyword id="KW-0812">Transmembrane</keyword>
<keyword id="KW-1133">Transmembrane helix</keyword>